<reference key="1">
    <citation type="journal article" date="2006" name="Nature">
        <title>Insights from the genome of the biotrophic fungal plant pathogen Ustilago maydis.</title>
        <authorList>
            <person name="Kaemper J."/>
            <person name="Kahmann R."/>
            <person name="Boelker M."/>
            <person name="Ma L.-J."/>
            <person name="Brefort T."/>
            <person name="Saville B.J."/>
            <person name="Banuett F."/>
            <person name="Kronstad J.W."/>
            <person name="Gold S.E."/>
            <person name="Mueller O."/>
            <person name="Perlin M.H."/>
            <person name="Woesten H.A.B."/>
            <person name="de Vries R."/>
            <person name="Ruiz-Herrera J."/>
            <person name="Reynaga-Pena C.G."/>
            <person name="Snetselaar K."/>
            <person name="McCann M."/>
            <person name="Perez-Martin J."/>
            <person name="Feldbruegge M."/>
            <person name="Basse C.W."/>
            <person name="Steinberg G."/>
            <person name="Ibeas J.I."/>
            <person name="Holloman W."/>
            <person name="Guzman P."/>
            <person name="Farman M.L."/>
            <person name="Stajich J.E."/>
            <person name="Sentandreu R."/>
            <person name="Gonzalez-Prieto J.M."/>
            <person name="Kennell J.C."/>
            <person name="Molina L."/>
            <person name="Schirawski J."/>
            <person name="Mendoza-Mendoza A."/>
            <person name="Greilinger D."/>
            <person name="Muench K."/>
            <person name="Roessel N."/>
            <person name="Scherer M."/>
            <person name="Vranes M."/>
            <person name="Ladendorf O."/>
            <person name="Vincon V."/>
            <person name="Fuchs U."/>
            <person name="Sandrock B."/>
            <person name="Meng S."/>
            <person name="Ho E.C.H."/>
            <person name="Cahill M.J."/>
            <person name="Boyce K.J."/>
            <person name="Klose J."/>
            <person name="Klosterman S.J."/>
            <person name="Deelstra H.J."/>
            <person name="Ortiz-Castellanos L."/>
            <person name="Li W."/>
            <person name="Sanchez-Alonso P."/>
            <person name="Schreier P.H."/>
            <person name="Haeuser-Hahn I."/>
            <person name="Vaupel M."/>
            <person name="Koopmann E."/>
            <person name="Friedrich G."/>
            <person name="Voss H."/>
            <person name="Schlueter T."/>
            <person name="Margolis J."/>
            <person name="Platt D."/>
            <person name="Swimmer C."/>
            <person name="Gnirke A."/>
            <person name="Chen F."/>
            <person name="Vysotskaia V."/>
            <person name="Mannhaupt G."/>
            <person name="Gueldener U."/>
            <person name="Muensterkoetter M."/>
            <person name="Haase D."/>
            <person name="Oesterheld M."/>
            <person name="Mewes H.-W."/>
            <person name="Mauceli E.W."/>
            <person name="DeCaprio D."/>
            <person name="Wade C.M."/>
            <person name="Butler J."/>
            <person name="Young S.K."/>
            <person name="Jaffe D.B."/>
            <person name="Calvo S.E."/>
            <person name="Nusbaum C."/>
            <person name="Galagan J.E."/>
            <person name="Birren B.W."/>
        </authorList>
    </citation>
    <scope>NUCLEOTIDE SEQUENCE [LARGE SCALE GENOMIC DNA]</scope>
    <source>
        <strain>DSM 14603 / FGSC 9021 / UM521</strain>
    </source>
</reference>
<reference key="2">
    <citation type="submission" date="2014-09" db="EMBL/GenBank/DDBJ databases">
        <authorList>
            <person name="Gueldener U."/>
            <person name="Muensterkoetter M."/>
            <person name="Walter M.C."/>
            <person name="Mannhaupt G."/>
            <person name="Kahmann R."/>
        </authorList>
    </citation>
    <scope>GENOME REANNOTATION</scope>
    <source>
        <strain>DSM 14603 / FGSC 9021 / UM521</strain>
    </source>
</reference>
<comment type="function">
    <text evidence="4">Proline-directed serine/threonine-protein kinase involved in a signal transduction pathway that is activated by changes in the osmolarity of the extracellular environment. Controls osmotic regulation of transcription of target genes.</text>
</comment>
<comment type="catalytic activity">
    <reaction evidence="2">
        <text>L-seryl-[protein] + ATP = O-phospho-L-seryl-[protein] + ADP + H(+)</text>
        <dbReference type="Rhea" id="RHEA:17989"/>
        <dbReference type="Rhea" id="RHEA-COMP:9863"/>
        <dbReference type="Rhea" id="RHEA-COMP:11604"/>
        <dbReference type="ChEBI" id="CHEBI:15378"/>
        <dbReference type="ChEBI" id="CHEBI:29999"/>
        <dbReference type="ChEBI" id="CHEBI:30616"/>
        <dbReference type="ChEBI" id="CHEBI:83421"/>
        <dbReference type="ChEBI" id="CHEBI:456216"/>
        <dbReference type="EC" id="2.7.11.24"/>
    </reaction>
    <physiologicalReaction direction="left-to-right" evidence="2">
        <dbReference type="Rhea" id="RHEA:17990"/>
    </physiologicalReaction>
</comment>
<comment type="catalytic activity">
    <reaction evidence="2">
        <text>L-threonyl-[protein] + ATP = O-phospho-L-threonyl-[protein] + ADP + H(+)</text>
        <dbReference type="Rhea" id="RHEA:46608"/>
        <dbReference type="Rhea" id="RHEA-COMP:11060"/>
        <dbReference type="Rhea" id="RHEA-COMP:11605"/>
        <dbReference type="ChEBI" id="CHEBI:15378"/>
        <dbReference type="ChEBI" id="CHEBI:30013"/>
        <dbReference type="ChEBI" id="CHEBI:30616"/>
        <dbReference type="ChEBI" id="CHEBI:61977"/>
        <dbReference type="ChEBI" id="CHEBI:456216"/>
        <dbReference type="EC" id="2.7.11.24"/>
    </reaction>
    <physiologicalReaction direction="left-to-right" evidence="2">
        <dbReference type="Rhea" id="RHEA:46609"/>
    </physiologicalReaction>
</comment>
<comment type="cofactor">
    <cofactor evidence="3">
        <name>Mg(2+)</name>
        <dbReference type="ChEBI" id="CHEBI:18420"/>
    </cofactor>
</comment>
<comment type="activity regulation">
    <text evidence="1">Activated by tyrosine and threonine phosphorylation.</text>
</comment>
<comment type="subcellular location">
    <subcellularLocation>
        <location evidence="1">Cytoplasm</location>
    </subcellularLocation>
    <subcellularLocation>
        <location evidence="1">Nucleus</location>
    </subcellularLocation>
</comment>
<comment type="domain">
    <text>The TXY motif contains the threonine and tyrosine residues whose phosphorylation activates the MAP kinases.</text>
</comment>
<comment type="PTM">
    <text evidence="1">Dually phosphorylated on Thr-171 and Tyr-173, which activates the enzyme.</text>
</comment>
<comment type="similarity">
    <text evidence="5">Belongs to the protein kinase superfamily. Ser/Thr protein kinase family. MAP kinase subfamily. HOG1 sub-subfamily.</text>
</comment>
<dbReference type="EC" id="2.7.11.24" evidence="2"/>
<dbReference type="EMBL" id="CM003144">
    <property type="protein sequence ID" value="KIS69835.1"/>
    <property type="molecule type" value="Genomic_DNA"/>
</dbReference>
<dbReference type="RefSeq" id="XP_011388664.1">
    <property type="nucleotide sequence ID" value="XM_011390362.1"/>
</dbReference>
<dbReference type="SMR" id="Q4PC06"/>
<dbReference type="FunCoup" id="Q4PC06">
    <property type="interactions" value="381"/>
</dbReference>
<dbReference type="STRING" id="237631.Q4PC06"/>
<dbReference type="EnsemblFungi" id="KIS69835">
    <property type="protein sequence ID" value="KIS69835"/>
    <property type="gene ID" value="UMAG_02357"/>
</dbReference>
<dbReference type="GeneID" id="23563123"/>
<dbReference type="KEGG" id="uma:UMAG_02357"/>
<dbReference type="VEuPathDB" id="FungiDB:UMAG_02357"/>
<dbReference type="eggNOG" id="KOG0660">
    <property type="taxonomic scope" value="Eukaryota"/>
</dbReference>
<dbReference type="HOGENOM" id="CLU_000288_181_1_1"/>
<dbReference type="InParanoid" id="Q4PC06"/>
<dbReference type="OMA" id="NRYTDLN"/>
<dbReference type="OrthoDB" id="192887at2759"/>
<dbReference type="Proteomes" id="UP000000561">
    <property type="component" value="Chromosome 5"/>
</dbReference>
<dbReference type="GO" id="GO:0005737">
    <property type="term" value="C:cytoplasm"/>
    <property type="evidence" value="ECO:0000318"/>
    <property type="project" value="GO_Central"/>
</dbReference>
<dbReference type="GO" id="GO:0005634">
    <property type="term" value="C:nucleus"/>
    <property type="evidence" value="ECO:0000318"/>
    <property type="project" value="GO_Central"/>
</dbReference>
<dbReference type="GO" id="GO:0005524">
    <property type="term" value="F:ATP binding"/>
    <property type="evidence" value="ECO:0007669"/>
    <property type="project" value="UniProtKB-KW"/>
</dbReference>
<dbReference type="GO" id="GO:0004707">
    <property type="term" value="F:MAP kinase activity"/>
    <property type="evidence" value="ECO:0007669"/>
    <property type="project" value="UniProtKB-EC"/>
</dbReference>
<dbReference type="GO" id="GO:0106310">
    <property type="term" value="F:protein serine kinase activity"/>
    <property type="evidence" value="ECO:0007669"/>
    <property type="project" value="RHEA"/>
</dbReference>
<dbReference type="GO" id="GO:0004674">
    <property type="term" value="F:protein serine/threonine kinase activity"/>
    <property type="evidence" value="ECO:0000318"/>
    <property type="project" value="GO_Central"/>
</dbReference>
<dbReference type="GO" id="GO:0034599">
    <property type="term" value="P:cellular response to oxidative stress"/>
    <property type="evidence" value="ECO:0000318"/>
    <property type="project" value="GO_Central"/>
</dbReference>
<dbReference type="GO" id="GO:0007231">
    <property type="term" value="P:osmosensory signaling pathway"/>
    <property type="evidence" value="ECO:0000318"/>
    <property type="project" value="GO_Central"/>
</dbReference>
<dbReference type="GO" id="GO:0051403">
    <property type="term" value="P:stress-activated MAPK cascade"/>
    <property type="evidence" value="ECO:0000318"/>
    <property type="project" value="GO_Central"/>
</dbReference>
<dbReference type="CDD" id="cd07856">
    <property type="entry name" value="STKc_Sty1_Hog1"/>
    <property type="match status" value="1"/>
</dbReference>
<dbReference type="FunFam" id="1.10.510.10:FF:000049">
    <property type="entry name" value="Mitogen-activated protein kinase"/>
    <property type="match status" value="1"/>
</dbReference>
<dbReference type="FunFam" id="3.30.200.20:FF:000050">
    <property type="entry name" value="Mitogen-activated protein kinase"/>
    <property type="match status" value="1"/>
</dbReference>
<dbReference type="Gene3D" id="3.30.200.20">
    <property type="entry name" value="Phosphorylase Kinase, domain 1"/>
    <property type="match status" value="1"/>
</dbReference>
<dbReference type="Gene3D" id="1.10.510.10">
    <property type="entry name" value="Transferase(Phosphotransferase) domain 1"/>
    <property type="match status" value="1"/>
</dbReference>
<dbReference type="InterPro" id="IPR011009">
    <property type="entry name" value="Kinase-like_dom_sf"/>
</dbReference>
<dbReference type="InterPro" id="IPR050117">
    <property type="entry name" value="MAP_kinase"/>
</dbReference>
<dbReference type="InterPro" id="IPR003527">
    <property type="entry name" value="MAP_kinase_CS"/>
</dbReference>
<dbReference type="InterPro" id="IPR008352">
    <property type="entry name" value="MAPK_p38-like"/>
</dbReference>
<dbReference type="InterPro" id="IPR038783">
    <property type="entry name" value="MAPK_Sty1/Hog1"/>
</dbReference>
<dbReference type="InterPro" id="IPR000719">
    <property type="entry name" value="Prot_kinase_dom"/>
</dbReference>
<dbReference type="InterPro" id="IPR017441">
    <property type="entry name" value="Protein_kinase_ATP_BS"/>
</dbReference>
<dbReference type="InterPro" id="IPR008271">
    <property type="entry name" value="Ser/Thr_kinase_AS"/>
</dbReference>
<dbReference type="PANTHER" id="PTHR24055">
    <property type="entry name" value="MITOGEN-ACTIVATED PROTEIN KINASE"/>
    <property type="match status" value="1"/>
</dbReference>
<dbReference type="Pfam" id="PF00069">
    <property type="entry name" value="Pkinase"/>
    <property type="match status" value="1"/>
</dbReference>
<dbReference type="PRINTS" id="PR01773">
    <property type="entry name" value="P38MAPKINASE"/>
</dbReference>
<dbReference type="SMART" id="SM00220">
    <property type="entry name" value="S_TKc"/>
    <property type="match status" value="1"/>
</dbReference>
<dbReference type="SUPFAM" id="SSF56112">
    <property type="entry name" value="Protein kinase-like (PK-like)"/>
    <property type="match status" value="1"/>
</dbReference>
<dbReference type="PROSITE" id="PS01351">
    <property type="entry name" value="MAPK"/>
    <property type="match status" value="1"/>
</dbReference>
<dbReference type="PROSITE" id="PS00107">
    <property type="entry name" value="PROTEIN_KINASE_ATP"/>
    <property type="match status" value="1"/>
</dbReference>
<dbReference type="PROSITE" id="PS50011">
    <property type="entry name" value="PROTEIN_KINASE_DOM"/>
    <property type="match status" value="1"/>
</dbReference>
<dbReference type="PROSITE" id="PS00108">
    <property type="entry name" value="PROTEIN_KINASE_ST"/>
    <property type="match status" value="1"/>
</dbReference>
<sequence>MADFVKLSIFGTVFEVTTRYVDLQPVGMGAFGLVCSANDQLTSTSVAIKKIMKPFSTPVLSKRTYRELKLLKHIRHENIISLSDIFISPLEDIYFVTELLGTDLHRLLTSRPLEKQFIQYFLYQILRGLKYVHSAGVVHRDLKPSNILVNENCDLKICDFGLARIQDPQMTGYVSTRYYRAPEIMLTWQKYDVAVDVWSAGCIFAEMLEGKPLFPGKDHVNQFSIITELLGTPPDEVIKTICSENTLRFVQSLPKRERVPFSQKFKNADPMALDLLEKMLVFDPRTRISAAEALAHPYLAPYHDPTDEPEAEEAFDWSFNDADLPVDTWKVMMYSEILDFHNIDNSGQDEGPVPPVNN</sequence>
<protein>
    <recommendedName>
        <fullName>Mitogen-activated protein kinase HOG1</fullName>
        <shortName>MAP kinase HOG1</shortName>
        <ecNumber evidence="2">2.7.11.24</ecNumber>
    </recommendedName>
</protein>
<name>HOG1_MYCMD</name>
<evidence type="ECO:0000250" key="1"/>
<evidence type="ECO:0000250" key="2">
    <source>
        <dbReference type="UniProtKB" id="P32485"/>
    </source>
</evidence>
<evidence type="ECO:0000250" key="3">
    <source>
        <dbReference type="UniProtKB" id="Q16539"/>
    </source>
</evidence>
<evidence type="ECO:0000250" key="4">
    <source>
        <dbReference type="UniProtKB" id="Q4WSF6"/>
    </source>
</evidence>
<evidence type="ECO:0000255" key="5">
    <source>
        <dbReference type="PROSITE-ProRule" id="PRU00159"/>
    </source>
</evidence>
<evidence type="ECO:0000255" key="6">
    <source>
        <dbReference type="PROSITE-ProRule" id="PRU10027"/>
    </source>
</evidence>
<organism>
    <name type="scientific">Mycosarcoma maydis</name>
    <name type="common">Corn smut fungus</name>
    <name type="synonym">Ustilago maydis</name>
    <dbReference type="NCBI Taxonomy" id="5270"/>
    <lineage>
        <taxon>Eukaryota</taxon>
        <taxon>Fungi</taxon>
        <taxon>Dikarya</taxon>
        <taxon>Basidiomycota</taxon>
        <taxon>Ustilaginomycotina</taxon>
        <taxon>Ustilaginomycetes</taxon>
        <taxon>Ustilaginales</taxon>
        <taxon>Ustilaginaceae</taxon>
        <taxon>Mycosarcoma</taxon>
    </lineage>
</organism>
<accession>Q4PC06</accession>
<accession>A0A0D1E612</accession>
<keyword id="KW-0010">Activator</keyword>
<keyword id="KW-0067">ATP-binding</keyword>
<keyword id="KW-0963">Cytoplasm</keyword>
<keyword id="KW-0418">Kinase</keyword>
<keyword id="KW-0547">Nucleotide-binding</keyword>
<keyword id="KW-0539">Nucleus</keyword>
<keyword id="KW-0597">Phosphoprotein</keyword>
<keyword id="KW-1185">Reference proteome</keyword>
<keyword id="KW-0723">Serine/threonine-protein kinase</keyword>
<keyword id="KW-0804">Transcription</keyword>
<keyword id="KW-0805">Transcription regulation</keyword>
<keyword id="KW-0808">Transferase</keyword>
<proteinExistence type="inferred from homology"/>
<gene>
    <name type="primary">HOG1</name>
    <name type="ORF">UMAG_02357</name>
</gene>
<feature type="chain" id="PRO_0000289705" description="Mitogen-activated protein kinase HOG1">
    <location>
        <begin position="1"/>
        <end position="358"/>
    </location>
</feature>
<feature type="domain" description="Protein kinase" evidence="5">
    <location>
        <begin position="20"/>
        <end position="299"/>
    </location>
</feature>
<feature type="short sequence motif" description="TXY">
    <location>
        <begin position="171"/>
        <end position="173"/>
    </location>
</feature>
<feature type="active site" description="Proton acceptor" evidence="5 6">
    <location>
        <position position="141"/>
    </location>
</feature>
<feature type="binding site" evidence="5">
    <location>
        <begin position="26"/>
        <end position="34"/>
    </location>
    <ligand>
        <name>ATP</name>
        <dbReference type="ChEBI" id="CHEBI:30616"/>
    </ligand>
</feature>
<feature type="binding site" evidence="5">
    <location>
        <position position="49"/>
    </location>
    <ligand>
        <name>ATP</name>
        <dbReference type="ChEBI" id="CHEBI:30616"/>
    </ligand>
</feature>
<feature type="modified residue" description="Phosphothreonine" evidence="1">
    <location>
        <position position="171"/>
    </location>
</feature>
<feature type="modified residue" description="Phosphotyrosine" evidence="1">
    <location>
        <position position="173"/>
    </location>
</feature>